<evidence type="ECO:0000250" key="1">
    <source>
        <dbReference type="UniProtKB" id="P35858"/>
    </source>
</evidence>
<evidence type="ECO:0000255" key="2"/>
<evidence type="ECO:0000269" key="3">
    <source>
    </source>
</evidence>
<sequence>MALRTGGPALVVLLAFWVALGPCHLQGTDPGASADAEGPQCPVACTCSHDDYTDELSVFCSSKNLTHLPDDIPVSTRALWLDGNNLSSIPSAAFQNLSSLDFLNLQGSWLRSLEPQALLGLQNLYYLHLERNRLRNLAVGLFTHTPSLASLSLSSNLLGRLEEGLFQGLSHLWDLNLGWNSLVVLPDTVFQGLGNLHELVLAGNKLTYLQPALFCGLGELRELDLSRNALRSVKANVFVHLPRLQKLYLDRNLITAVAPGAFLGMKALRWLDLSHNRVAGLMEDTFPGLLGLHVLRLAHNAIASLRPRTFKDLHFLEELQLGHNRIRQLGERTFEGLGQLEVLTLNDNQITEVRVGAFSGLFNVAVMNLSGNCLRSLPERVFQGLDKLHSLHLEHSCLGHVRLHTFAGLSGLRRLFLRDNSISSIEEQSLAGLSELLELDLTTNRLTHLPRQLFQGLGHLEYLLLSYNQLTTLSAEVLGPLQRAFWLDISHNHLETLAEGLFSSLGRVRYLSLRNNSLQTFSPQPGLERLWLDANPWDCSCPLKALRDFALQNPGVVPRFVQTVCEGDDCQPVYTYNNITCAGPANVSGLDLRDVSETHFVHC</sequence>
<protein>
    <recommendedName>
        <fullName>Insulin-like growth factor-binding protein complex acid labile subunit</fullName>
        <shortName>ALS</shortName>
    </recommendedName>
</protein>
<organism>
    <name type="scientific">Rattus norvegicus</name>
    <name type="common">Rat</name>
    <dbReference type="NCBI Taxonomy" id="10116"/>
    <lineage>
        <taxon>Eukaryota</taxon>
        <taxon>Metazoa</taxon>
        <taxon>Chordata</taxon>
        <taxon>Craniata</taxon>
        <taxon>Vertebrata</taxon>
        <taxon>Euteleostomi</taxon>
        <taxon>Mammalia</taxon>
        <taxon>Eutheria</taxon>
        <taxon>Euarchontoglires</taxon>
        <taxon>Glires</taxon>
        <taxon>Rodentia</taxon>
        <taxon>Myomorpha</taxon>
        <taxon>Muroidea</taxon>
        <taxon>Muridae</taxon>
        <taxon>Murinae</taxon>
        <taxon>Rattus</taxon>
    </lineage>
</organism>
<dbReference type="EMBL" id="S46785">
    <property type="protein sequence ID" value="AAB23770.2"/>
    <property type="molecule type" value="mRNA"/>
</dbReference>
<dbReference type="PIR" id="JC1282">
    <property type="entry name" value="JC1282"/>
</dbReference>
<dbReference type="RefSeq" id="NP_445781.2">
    <property type="nucleotide sequence ID" value="NM_053329.2"/>
</dbReference>
<dbReference type="SMR" id="P35859"/>
<dbReference type="FunCoup" id="P35859">
    <property type="interactions" value="19"/>
</dbReference>
<dbReference type="STRING" id="10116.ENSRNOP00000020233"/>
<dbReference type="GlyCosmos" id="P35859">
    <property type="glycosylation" value="7 sites, No reported glycans"/>
</dbReference>
<dbReference type="GlyGen" id="P35859">
    <property type="glycosylation" value="7 sites"/>
</dbReference>
<dbReference type="PhosphoSitePlus" id="P35859"/>
<dbReference type="PaxDb" id="10116-ENSRNOP00000020233"/>
<dbReference type="GeneID" id="79438"/>
<dbReference type="KEGG" id="rno:79438"/>
<dbReference type="UCSC" id="RGD:68429">
    <property type="organism name" value="rat"/>
</dbReference>
<dbReference type="AGR" id="RGD:68429"/>
<dbReference type="CTD" id="3483"/>
<dbReference type="RGD" id="68429">
    <property type="gene designation" value="Igfals"/>
</dbReference>
<dbReference type="eggNOG" id="KOG0619">
    <property type="taxonomic scope" value="Eukaryota"/>
</dbReference>
<dbReference type="InParanoid" id="P35859"/>
<dbReference type="OrthoDB" id="9229163at2759"/>
<dbReference type="PhylomeDB" id="P35859"/>
<dbReference type="Reactome" id="R-RNO-381426">
    <property type="pathway name" value="Regulation of Insulin-like Growth Factor (IGF) transport and uptake by Insulin-like Growth Factor Binding Proteins (IGFBPs)"/>
</dbReference>
<dbReference type="PRO" id="PR:P35859"/>
<dbReference type="Proteomes" id="UP000002494">
    <property type="component" value="Unplaced"/>
</dbReference>
<dbReference type="GO" id="GO:0031012">
    <property type="term" value="C:extracellular matrix"/>
    <property type="evidence" value="ECO:0000318"/>
    <property type="project" value="GO_Central"/>
</dbReference>
<dbReference type="GO" id="GO:0005615">
    <property type="term" value="C:extracellular space"/>
    <property type="evidence" value="ECO:0000318"/>
    <property type="project" value="GO_Central"/>
</dbReference>
<dbReference type="GO" id="GO:0042567">
    <property type="term" value="C:insulin-like growth factor ternary complex"/>
    <property type="evidence" value="ECO:0000314"/>
    <property type="project" value="RGD"/>
</dbReference>
<dbReference type="GO" id="GO:0005520">
    <property type="term" value="F:insulin-like growth factor binding"/>
    <property type="evidence" value="ECO:0000314"/>
    <property type="project" value="RGD"/>
</dbReference>
<dbReference type="GO" id="GO:0007155">
    <property type="term" value="P:cell adhesion"/>
    <property type="evidence" value="ECO:0007669"/>
    <property type="project" value="UniProtKB-KW"/>
</dbReference>
<dbReference type="GO" id="GO:0071549">
    <property type="term" value="P:cellular response to dexamethasone stimulus"/>
    <property type="evidence" value="ECO:0000270"/>
    <property type="project" value="RGD"/>
</dbReference>
<dbReference type="GO" id="GO:0071364">
    <property type="term" value="P:cellular response to epidermal growth factor stimulus"/>
    <property type="evidence" value="ECO:0000270"/>
    <property type="project" value="RGD"/>
</dbReference>
<dbReference type="GO" id="GO:0071378">
    <property type="term" value="P:cellular response to growth hormone stimulus"/>
    <property type="evidence" value="ECO:0000270"/>
    <property type="project" value="RGD"/>
</dbReference>
<dbReference type="GO" id="GO:0071347">
    <property type="term" value="P:cellular response to interleukin-1"/>
    <property type="evidence" value="ECO:0000270"/>
    <property type="project" value="RGD"/>
</dbReference>
<dbReference type="GO" id="GO:0031667">
    <property type="term" value="P:response to nutrient levels"/>
    <property type="evidence" value="ECO:0000270"/>
    <property type="project" value="RGD"/>
</dbReference>
<dbReference type="FunFam" id="3.80.10.10:FF:000540">
    <property type="entry name" value="Insulin-like growth factor-binding protein complex acid labile subunit"/>
    <property type="match status" value="1"/>
</dbReference>
<dbReference type="FunFam" id="3.80.10.10:FF:001263">
    <property type="entry name" value="Insulin-like growth factor-binding protein complex acid labile subunit"/>
    <property type="match status" value="1"/>
</dbReference>
<dbReference type="FunFam" id="3.80.10.10:FF:001264">
    <property type="entry name" value="Insulin-like growth factor-binding protein complex acid labile subunit"/>
    <property type="match status" value="1"/>
</dbReference>
<dbReference type="FunFam" id="3.80.10.10:FF:001518">
    <property type="entry name" value="Insulin-like growth factor-binding protein complex acid labile subunit"/>
    <property type="match status" value="1"/>
</dbReference>
<dbReference type="Gene3D" id="3.80.10.10">
    <property type="entry name" value="Ribonuclease Inhibitor"/>
    <property type="match status" value="4"/>
</dbReference>
<dbReference type="InterPro" id="IPR000483">
    <property type="entry name" value="Cys-rich_flank_reg_C"/>
</dbReference>
<dbReference type="InterPro" id="IPR050328">
    <property type="entry name" value="Dev_Immune_Receptor"/>
</dbReference>
<dbReference type="InterPro" id="IPR001611">
    <property type="entry name" value="Leu-rich_rpt"/>
</dbReference>
<dbReference type="InterPro" id="IPR003591">
    <property type="entry name" value="Leu-rich_rpt_typical-subtyp"/>
</dbReference>
<dbReference type="InterPro" id="IPR032675">
    <property type="entry name" value="LRR_dom_sf"/>
</dbReference>
<dbReference type="InterPro" id="IPR000372">
    <property type="entry name" value="LRRNT"/>
</dbReference>
<dbReference type="PANTHER" id="PTHR24373:SF285">
    <property type="entry name" value="INSULIN-LIKE GROWTH FACTOR-BINDING PROTEIN COMPLEX ACID LABILE SUBUNIT"/>
    <property type="match status" value="1"/>
</dbReference>
<dbReference type="PANTHER" id="PTHR24373">
    <property type="entry name" value="SLIT RELATED LEUCINE-RICH REPEAT NEURONAL PROTEIN"/>
    <property type="match status" value="1"/>
</dbReference>
<dbReference type="Pfam" id="PF13855">
    <property type="entry name" value="LRR_8"/>
    <property type="match status" value="4"/>
</dbReference>
<dbReference type="Pfam" id="PF01462">
    <property type="entry name" value="LRRNT"/>
    <property type="match status" value="1"/>
</dbReference>
<dbReference type="SMART" id="SM00364">
    <property type="entry name" value="LRR_BAC"/>
    <property type="match status" value="5"/>
</dbReference>
<dbReference type="SMART" id="SM00365">
    <property type="entry name" value="LRR_SD22"/>
    <property type="match status" value="3"/>
</dbReference>
<dbReference type="SMART" id="SM00369">
    <property type="entry name" value="LRR_TYP"/>
    <property type="match status" value="19"/>
</dbReference>
<dbReference type="SMART" id="SM00082">
    <property type="entry name" value="LRRCT"/>
    <property type="match status" value="1"/>
</dbReference>
<dbReference type="SMART" id="SM00013">
    <property type="entry name" value="LRRNT"/>
    <property type="match status" value="1"/>
</dbReference>
<dbReference type="SUPFAM" id="SSF52058">
    <property type="entry name" value="L domain-like"/>
    <property type="match status" value="2"/>
</dbReference>
<proteinExistence type="evidence at protein level"/>
<feature type="signal peptide" evidence="3">
    <location>
        <begin position="1"/>
        <end position="23"/>
    </location>
</feature>
<feature type="chain" id="PRO_0000020698" description="Insulin-like growth factor-binding protein complex acid labile subunit">
    <location>
        <begin position="24"/>
        <end position="603"/>
    </location>
</feature>
<feature type="domain" description="LRRNT">
    <location>
        <begin position="32"/>
        <end position="74"/>
    </location>
</feature>
<feature type="repeat" description="LRR 1">
    <location>
        <begin position="75"/>
        <end position="96"/>
    </location>
</feature>
<feature type="repeat" description="LRR 2">
    <location>
        <begin position="99"/>
        <end position="120"/>
    </location>
</feature>
<feature type="repeat" description="LRR 3">
    <location>
        <begin position="123"/>
        <end position="144"/>
    </location>
</feature>
<feature type="repeat" description="LRR 4">
    <location>
        <begin position="147"/>
        <end position="168"/>
    </location>
</feature>
<feature type="repeat" description="LRR 5">
    <location>
        <begin position="171"/>
        <end position="192"/>
    </location>
</feature>
<feature type="repeat" description="LRR 6">
    <location>
        <begin position="195"/>
        <end position="216"/>
    </location>
</feature>
<feature type="repeat" description="LRR 7">
    <location>
        <begin position="219"/>
        <end position="240"/>
    </location>
</feature>
<feature type="repeat" description="LRR 8">
    <location>
        <begin position="243"/>
        <end position="264"/>
    </location>
</feature>
<feature type="repeat" description="LRR 9">
    <location>
        <begin position="267"/>
        <end position="288"/>
    </location>
</feature>
<feature type="repeat" description="LRR 10">
    <location>
        <begin position="291"/>
        <end position="312"/>
    </location>
</feature>
<feature type="repeat" description="LRR 11">
    <location>
        <begin position="315"/>
        <end position="336"/>
    </location>
</feature>
<feature type="repeat" description="LRR 12">
    <location>
        <begin position="339"/>
        <end position="360"/>
    </location>
</feature>
<feature type="repeat" description="LRR 13">
    <location>
        <begin position="363"/>
        <end position="384"/>
    </location>
</feature>
<feature type="repeat" description="LRR 14">
    <location>
        <begin position="387"/>
        <end position="408"/>
    </location>
</feature>
<feature type="repeat" description="LRR 15">
    <location>
        <begin position="411"/>
        <end position="432"/>
    </location>
</feature>
<feature type="repeat" description="LRR 16">
    <location>
        <begin position="435"/>
        <end position="456"/>
    </location>
</feature>
<feature type="repeat" description="LRR 17">
    <location>
        <begin position="459"/>
        <end position="480"/>
    </location>
</feature>
<feature type="repeat" description="LRR 18">
    <location>
        <begin position="483"/>
        <end position="504"/>
    </location>
</feature>
<feature type="repeat" description="LRR 19">
    <location>
        <begin position="507"/>
        <end position="528"/>
    </location>
</feature>
<feature type="domain" description="LRRCT">
    <location>
        <begin position="535"/>
        <end position="603"/>
    </location>
</feature>
<feature type="glycosylation site" description="N-linked (GlcNAc...) asparagine" evidence="2">
    <location>
        <position position="64"/>
    </location>
</feature>
<feature type="glycosylation site" description="N-linked (GlcNAc...) asparagine" evidence="2">
    <location>
        <position position="85"/>
    </location>
</feature>
<feature type="glycosylation site" description="N-linked (GlcNAc...) asparagine" evidence="2">
    <location>
        <position position="96"/>
    </location>
</feature>
<feature type="glycosylation site" description="N-linked (GlcNAc...) asparagine" evidence="2">
    <location>
        <position position="368"/>
    </location>
</feature>
<feature type="glycosylation site" description="N-linked (GlcNAc...) asparagine" evidence="2">
    <location>
        <position position="515"/>
    </location>
</feature>
<feature type="glycosylation site" description="N-linked (GlcNAc...) asparagine" evidence="2">
    <location>
        <position position="578"/>
    </location>
</feature>
<feature type="glycosylation site" description="N-linked (GlcNAc...) asparagine" evidence="2">
    <location>
        <position position="586"/>
    </location>
</feature>
<feature type="disulfide bond" evidence="1">
    <location>
        <begin position="41"/>
        <end position="47"/>
    </location>
</feature>
<feature type="disulfide bond" evidence="1">
    <location>
        <begin position="45"/>
        <end position="60"/>
    </location>
</feature>
<feature type="disulfide bond" evidence="1">
    <location>
        <begin position="539"/>
        <end position="581"/>
    </location>
</feature>
<feature type="disulfide bond" evidence="1">
    <location>
        <begin position="541"/>
        <end position="603"/>
    </location>
</feature>
<feature type="disulfide bond" evidence="1">
    <location>
        <begin position="565"/>
        <end position="570"/>
    </location>
</feature>
<gene>
    <name type="primary">Igfals</name>
    <name type="synonym">Als</name>
</gene>
<comment type="function">
    <text>May have an important role in regulating the access of circulating IGFs to the tissues.</text>
</comment>
<comment type="subunit">
    <text evidence="1">Forms a ternary complex with IGF1 and IGFBP3.</text>
</comment>
<comment type="subcellular location">
    <subcellularLocation>
        <location>Secreted</location>
        <location>Extracellular space</location>
    </subcellularLocation>
</comment>
<comment type="tissue specificity">
    <text>Brain, kidney, lung, heart, spleen, muscle and liver.</text>
</comment>
<accession>P35859</accession>
<name>ALS_RAT</name>
<keyword id="KW-0130">Cell adhesion</keyword>
<keyword id="KW-0903">Direct protein sequencing</keyword>
<keyword id="KW-1015">Disulfide bond</keyword>
<keyword id="KW-0325">Glycoprotein</keyword>
<keyword id="KW-0433">Leucine-rich repeat</keyword>
<keyword id="KW-1185">Reference proteome</keyword>
<keyword id="KW-0677">Repeat</keyword>
<keyword id="KW-0964">Secreted</keyword>
<keyword id="KW-0732">Signal</keyword>
<reference key="1">
    <citation type="journal article" date="1992" name="Biochem. Biophys. Res. Commun.">
        <title>Molecular cloning of the acid-labile subunit of the rat insulin-like growth factor binding protein complex.</title>
        <authorList>
            <person name="Dai J."/>
            <person name="Baxter R.C."/>
        </authorList>
    </citation>
    <scope>NUCLEOTIDE SEQUENCE [MRNA]</scope>
    <source>
        <tissue>Liver</tissue>
    </source>
</reference>
<reference key="2">
    <citation type="journal article" date="1994" name="Endocrinology">
        <title>Purification and characterization of the acid-labile subunit of rat serum insulin-like growth factor binding protein complex.</title>
        <authorList>
            <person name="Baxter R.C."/>
            <person name="Dai J."/>
        </authorList>
    </citation>
    <scope>PROTEIN SEQUENCE OF 24-44</scope>
    <scope>CHARACTERIZATION</scope>
    <source>
        <strain>Wistar</strain>
        <tissue>Serum</tissue>
    </source>
</reference>